<dbReference type="EC" id="6.3.5.7" evidence="1"/>
<dbReference type="EMBL" id="AP009351">
    <property type="protein sequence ID" value="BAF68110.1"/>
    <property type="molecule type" value="Genomic_DNA"/>
</dbReference>
<dbReference type="RefSeq" id="WP_000027928.1">
    <property type="nucleotide sequence ID" value="NZ_JBBIAE010000010.1"/>
</dbReference>
<dbReference type="SMR" id="A6QIC8"/>
<dbReference type="KEGG" id="sae:NWMN_1838"/>
<dbReference type="HOGENOM" id="CLU_009600_0_3_9"/>
<dbReference type="Proteomes" id="UP000006386">
    <property type="component" value="Chromosome"/>
</dbReference>
<dbReference type="GO" id="GO:0030956">
    <property type="term" value="C:glutamyl-tRNA(Gln) amidotransferase complex"/>
    <property type="evidence" value="ECO:0007669"/>
    <property type="project" value="InterPro"/>
</dbReference>
<dbReference type="GO" id="GO:0005524">
    <property type="term" value="F:ATP binding"/>
    <property type="evidence" value="ECO:0007669"/>
    <property type="project" value="UniProtKB-KW"/>
</dbReference>
<dbReference type="GO" id="GO:0050567">
    <property type="term" value="F:glutaminyl-tRNA synthase (glutamine-hydrolyzing) activity"/>
    <property type="evidence" value="ECO:0007669"/>
    <property type="project" value="UniProtKB-UniRule"/>
</dbReference>
<dbReference type="GO" id="GO:0006412">
    <property type="term" value="P:translation"/>
    <property type="evidence" value="ECO:0007669"/>
    <property type="project" value="UniProtKB-UniRule"/>
</dbReference>
<dbReference type="Gene3D" id="3.90.1300.10">
    <property type="entry name" value="Amidase signature (AS) domain"/>
    <property type="match status" value="1"/>
</dbReference>
<dbReference type="HAMAP" id="MF_00120">
    <property type="entry name" value="GatA"/>
    <property type="match status" value="1"/>
</dbReference>
<dbReference type="InterPro" id="IPR000120">
    <property type="entry name" value="Amidase"/>
</dbReference>
<dbReference type="InterPro" id="IPR020556">
    <property type="entry name" value="Amidase_CS"/>
</dbReference>
<dbReference type="InterPro" id="IPR023631">
    <property type="entry name" value="Amidase_dom"/>
</dbReference>
<dbReference type="InterPro" id="IPR036928">
    <property type="entry name" value="AS_sf"/>
</dbReference>
<dbReference type="InterPro" id="IPR004412">
    <property type="entry name" value="GatA"/>
</dbReference>
<dbReference type="NCBIfam" id="TIGR00132">
    <property type="entry name" value="gatA"/>
    <property type="match status" value="1"/>
</dbReference>
<dbReference type="PANTHER" id="PTHR11895:SF151">
    <property type="entry name" value="GLUTAMYL-TRNA(GLN) AMIDOTRANSFERASE SUBUNIT A"/>
    <property type="match status" value="1"/>
</dbReference>
<dbReference type="PANTHER" id="PTHR11895">
    <property type="entry name" value="TRANSAMIDASE"/>
    <property type="match status" value="1"/>
</dbReference>
<dbReference type="Pfam" id="PF01425">
    <property type="entry name" value="Amidase"/>
    <property type="match status" value="1"/>
</dbReference>
<dbReference type="SUPFAM" id="SSF75304">
    <property type="entry name" value="Amidase signature (AS) enzymes"/>
    <property type="match status" value="1"/>
</dbReference>
<dbReference type="PROSITE" id="PS00571">
    <property type="entry name" value="AMIDASES"/>
    <property type="match status" value="1"/>
</dbReference>
<evidence type="ECO:0000255" key="1">
    <source>
        <dbReference type="HAMAP-Rule" id="MF_00120"/>
    </source>
</evidence>
<proteinExistence type="inferred from homology"/>
<protein>
    <recommendedName>
        <fullName evidence="1">Glutamyl-tRNA(Gln) amidotransferase subunit A</fullName>
        <shortName evidence="1">Glu-ADT subunit A</shortName>
        <ecNumber evidence="1">6.3.5.7</ecNumber>
    </recommendedName>
</protein>
<organism>
    <name type="scientific">Staphylococcus aureus (strain Newman)</name>
    <dbReference type="NCBI Taxonomy" id="426430"/>
    <lineage>
        <taxon>Bacteria</taxon>
        <taxon>Bacillati</taxon>
        <taxon>Bacillota</taxon>
        <taxon>Bacilli</taxon>
        <taxon>Bacillales</taxon>
        <taxon>Staphylococcaceae</taxon>
        <taxon>Staphylococcus</taxon>
    </lineage>
</organism>
<keyword id="KW-0067">ATP-binding</keyword>
<keyword id="KW-0436">Ligase</keyword>
<keyword id="KW-0547">Nucleotide-binding</keyword>
<keyword id="KW-0648">Protein biosynthesis</keyword>
<feature type="chain" id="PRO_1000071371" description="Glutamyl-tRNA(Gln) amidotransferase subunit A">
    <location>
        <begin position="1"/>
        <end position="485"/>
    </location>
</feature>
<feature type="active site" description="Charge relay system" evidence="1">
    <location>
        <position position="79"/>
    </location>
</feature>
<feature type="active site" description="Charge relay system" evidence="1">
    <location>
        <position position="154"/>
    </location>
</feature>
<feature type="active site" description="Acyl-ester intermediate" evidence="1">
    <location>
        <position position="178"/>
    </location>
</feature>
<accession>A6QIC8</accession>
<name>GATA_STAAE</name>
<sequence length="485" mass="52821">MSIRYESVENLLTLIKDKKIKPSDVVKDIYDAIEETDPTIKSFLALDKENAIKKAQELDELQAKDQMDGKLFGIPMGIKDNIITNGLETTCASKMLEGFVPIYESTVMEKLHNENAVLIGKLNMDEFAMGGSTETSYFKKTVNPFDHKAVPGGSSGGSAAAVAAGLVPFSLGSDTGGSIRQPAAYCGVVGMKPTYGRVSRFGLVAFASSLDQIGPLTRNVKDNAIVLEAISGADVNDSTSAPVDDVDFTSEIGKDIKGLKVALPKEYLGEGVADDVKEAVQNAVETLKSLGAVVEEVSLPNTKFGIPSYYVIASSEASSNLSRFDGIRYGYHSKEAHSLEELYKMSRSEGFGKEVKRRIFLGTFALSSGYYDAYYKKSQKVRTLIKNDFDKVFENYDVVVGPTAPTTAFNLGEEIDDPLTMYANDLLTTPVNLAGLPGISVPCGQSNGRPIGLQFIGKPFDEKTLYRVAYQYETQYNLHDVYEKL</sequence>
<comment type="function">
    <text evidence="1">Allows the formation of correctly charged Gln-tRNA(Gln) through the transamidation of misacylated Glu-tRNA(Gln) in organisms which lack glutaminyl-tRNA synthetase. The reaction takes place in the presence of glutamine and ATP through an activated gamma-phospho-Glu-tRNA(Gln).</text>
</comment>
<comment type="catalytic activity">
    <reaction evidence="1">
        <text>L-glutamyl-tRNA(Gln) + L-glutamine + ATP + H2O = L-glutaminyl-tRNA(Gln) + L-glutamate + ADP + phosphate + H(+)</text>
        <dbReference type="Rhea" id="RHEA:17521"/>
        <dbReference type="Rhea" id="RHEA-COMP:9681"/>
        <dbReference type="Rhea" id="RHEA-COMP:9684"/>
        <dbReference type="ChEBI" id="CHEBI:15377"/>
        <dbReference type="ChEBI" id="CHEBI:15378"/>
        <dbReference type="ChEBI" id="CHEBI:29985"/>
        <dbReference type="ChEBI" id="CHEBI:30616"/>
        <dbReference type="ChEBI" id="CHEBI:43474"/>
        <dbReference type="ChEBI" id="CHEBI:58359"/>
        <dbReference type="ChEBI" id="CHEBI:78520"/>
        <dbReference type="ChEBI" id="CHEBI:78521"/>
        <dbReference type="ChEBI" id="CHEBI:456216"/>
        <dbReference type="EC" id="6.3.5.7"/>
    </reaction>
</comment>
<comment type="subunit">
    <text evidence="1">Heterotrimer of A, B and C subunits.</text>
</comment>
<comment type="similarity">
    <text evidence="1">Belongs to the amidase family. GatA subfamily.</text>
</comment>
<gene>
    <name evidence="1" type="primary">gatA</name>
    <name type="ordered locus">NWMN_1838</name>
</gene>
<reference key="1">
    <citation type="journal article" date="2008" name="J. Bacteriol.">
        <title>Genome sequence of Staphylococcus aureus strain Newman and comparative analysis of staphylococcal genomes: polymorphism and evolution of two major pathogenicity islands.</title>
        <authorList>
            <person name="Baba T."/>
            <person name="Bae T."/>
            <person name="Schneewind O."/>
            <person name="Takeuchi F."/>
            <person name="Hiramatsu K."/>
        </authorList>
    </citation>
    <scope>NUCLEOTIDE SEQUENCE [LARGE SCALE GENOMIC DNA]</scope>
    <source>
        <strain>Newman</strain>
    </source>
</reference>